<protein>
    <recommendedName>
        <fullName>Pyruvate dehydrogenase complex subunit homolog DDB_G0271564, mitochondrial</fullName>
    </recommendedName>
</protein>
<accession>Q86AD5</accession>
<accession>Q55AS9</accession>
<organism>
    <name type="scientific">Dictyostelium discoideum</name>
    <name type="common">Social amoeba</name>
    <dbReference type="NCBI Taxonomy" id="44689"/>
    <lineage>
        <taxon>Eukaryota</taxon>
        <taxon>Amoebozoa</taxon>
        <taxon>Evosea</taxon>
        <taxon>Eumycetozoa</taxon>
        <taxon>Dictyostelia</taxon>
        <taxon>Dictyosteliales</taxon>
        <taxon>Dictyosteliaceae</taxon>
        <taxon>Dictyostelium</taxon>
    </lineage>
</organism>
<name>Y1564_DICDI</name>
<sequence length="413" mass="45747">MNRILKQVSNTKGKGIRFYSSSSQLDSEYMFPSVRRLLVEYGINSSKEVTATGPQNRLLKGDVLAYIKTKNLSPVDRLSLIASSVKSSQPSSSSSPSIVDSPTLTSQIKDQIKIVTTITNDKNKSKVIYEDIPNNNIRRVIATKLSQSKQQVPHFYMTVECELDNVLAMRKSMPENVKISVNDFVLRACALALRDNPQANSKWSDEHGEAILNPTVDISFAVSTDRGLITPIITNTDKKQLLAISNESKQLALKARDGKLKPEEFIGGTFSVSNLGMFGITSFNAIINYPQAGILAIGTGRKVLRPPSTYQPIETNLNASYGSEGKSEIINTNGPLTTEQLEKLFDNTVSKKQDIKQQIINEQPQPPKYEQPKVANVMDVTLSGDNRVFDDEIAGKFLSSFKYYLSNPQNMIL</sequence>
<dbReference type="EMBL" id="AAFI02000006">
    <property type="protein sequence ID" value="EAL71646.1"/>
    <property type="molecule type" value="Genomic_DNA"/>
</dbReference>
<dbReference type="RefSeq" id="XP_645617.1">
    <property type="nucleotide sequence ID" value="XM_640525.1"/>
</dbReference>
<dbReference type="SMR" id="Q86AD5"/>
<dbReference type="FunCoup" id="Q86AD5">
    <property type="interactions" value="2"/>
</dbReference>
<dbReference type="STRING" id="44689.Q86AD5"/>
<dbReference type="PaxDb" id="44689-DDB0230192"/>
<dbReference type="EnsemblProtists" id="EAL71646">
    <property type="protein sequence ID" value="EAL71646"/>
    <property type="gene ID" value="DDB_G0271564"/>
</dbReference>
<dbReference type="GeneID" id="8618072"/>
<dbReference type="KEGG" id="ddi:DDB_G0271564"/>
<dbReference type="dictyBase" id="DDB_G0271564">
    <property type="gene designation" value="pdhX"/>
</dbReference>
<dbReference type="VEuPathDB" id="AmoebaDB:DDB_G0271564"/>
<dbReference type="eggNOG" id="KOG0557">
    <property type="taxonomic scope" value="Eukaryota"/>
</dbReference>
<dbReference type="HOGENOM" id="CLU_016733_10_2_1"/>
<dbReference type="InParanoid" id="Q86AD5"/>
<dbReference type="OMA" id="HEFMGGS"/>
<dbReference type="PhylomeDB" id="Q86AD5"/>
<dbReference type="Reactome" id="R-DDI-9861559">
    <property type="pathway name" value="PDH complex synthesizes acetyl-CoA from PYR"/>
</dbReference>
<dbReference type="PRO" id="PR:Q86AD5"/>
<dbReference type="Proteomes" id="UP000002195">
    <property type="component" value="Chromosome 2"/>
</dbReference>
<dbReference type="GO" id="GO:0005739">
    <property type="term" value="C:mitochondrion"/>
    <property type="evidence" value="ECO:0000318"/>
    <property type="project" value="GO_Central"/>
</dbReference>
<dbReference type="GO" id="GO:0045254">
    <property type="term" value="C:pyruvate dehydrogenase complex"/>
    <property type="evidence" value="ECO:0000250"/>
    <property type="project" value="dictyBase"/>
</dbReference>
<dbReference type="GO" id="GO:0016746">
    <property type="term" value="F:acyltransferase activity"/>
    <property type="evidence" value="ECO:0007669"/>
    <property type="project" value="InterPro"/>
</dbReference>
<dbReference type="GO" id="GO:0006096">
    <property type="term" value="P:glycolytic process"/>
    <property type="evidence" value="ECO:0007669"/>
    <property type="project" value="UniProtKB-KW"/>
</dbReference>
<dbReference type="GO" id="GO:0006086">
    <property type="term" value="P:pyruvate decarboxylation to acetyl-CoA"/>
    <property type="evidence" value="ECO:0000250"/>
    <property type="project" value="dictyBase"/>
</dbReference>
<dbReference type="Gene3D" id="3.30.559.10">
    <property type="entry name" value="Chloramphenicol acetyltransferase-like domain"/>
    <property type="match status" value="1"/>
</dbReference>
<dbReference type="Gene3D" id="4.10.320.10">
    <property type="entry name" value="E3-binding domain"/>
    <property type="match status" value="1"/>
</dbReference>
<dbReference type="InterPro" id="IPR001078">
    <property type="entry name" value="2-oxoacid_DH_actylTfrase"/>
</dbReference>
<dbReference type="InterPro" id="IPR023213">
    <property type="entry name" value="CAT-like_dom_sf"/>
</dbReference>
<dbReference type="InterPro" id="IPR045257">
    <property type="entry name" value="E2/Pdx1"/>
</dbReference>
<dbReference type="InterPro" id="IPR036625">
    <property type="entry name" value="E3-bd_dom_sf"/>
</dbReference>
<dbReference type="InterPro" id="IPR004167">
    <property type="entry name" value="PSBD"/>
</dbReference>
<dbReference type="PANTHER" id="PTHR23151">
    <property type="entry name" value="DIHYDROLIPOAMIDE ACETYL/SUCCINYL-TRANSFERASE-RELATED"/>
    <property type="match status" value="1"/>
</dbReference>
<dbReference type="PANTHER" id="PTHR23151:SF90">
    <property type="entry name" value="DIHYDROLIPOYLLYSINE-RESIDUE ACETYLTRANSFERASE COMPONENT OF PYRUVATE DEHYDROGENASE COMPLEX, MITOCHONDRIAL-RELATED"/>
    <property type="match status" value="1"/>
</dbReference>
<dbReference type="Pfam" id="PF00198">
    <property type="entry name" value="2-oxoacid_dh"/>
    <property type="match status" value="2"/>
</dbReference>
<dbReference type="Pfam" id="PF02817">
    <property type="entry name" value="E3_binding"/>
    <property type="match status" value="1"/>
</dbReference>
<dbReference type="SUPFAM" id="SSF52777">
    <property type="entry name" value="CoA-dependent acyltransferases"/>
    <property type="match status" value="2"/>
</dbReference>
<dbReference type="SUPFAM" id="SSF47005">
    <property type="entry name" value="Peripheral subunit-binding domain of 2-oxo acid dehydrogenase complex"/>
    <property type="match status" value="1"/>
</dbReference>
<dbReference type="PROSITE" id="PS51826">
    <property type="entry name" value="PSBD"/>
    <property type="match status" value="1"/>
</dbReference>
<proteinExistence type="inferred from homology"/>
<feature type="transit peptide" description="Mitochondrion" evidence="2">
    <location>
        <begin position="1"/>
        <end position="19"/>
    </location>
</feature>
<feature type="chain" id="PRO_0000391458" description="Pyruvate dehydrogenase complex subunit homolog DDB_G0271564, mitochondrial">
    <location>
        <begin position="20"/>
        <end position="413"/>
    </location>
</feature>
<feature type="domain" description="Peripheral subunit-binding (PSBD)" evidence="3">
    <location>
        <begin position="29"/>
        <end position="67"/>
    </location>
</feature>
<comment type="function">
    <text evidence="1">The pyruvate dehydrogenase complex catalyzes the overall conversion of pyruvate to acetyl-CoA and CO(2). It contains multiple copies of three enzymatic components: pyruvate dehydrogenase (E1), dihydrolipoamide acetyltransferase (E2) and lipoamide dehydrogenase (E3) (By similarity).</text>
</comment>
<comment type="subcellular location">
    <subcellularLocation>
        <location evidence="4">Mitochondrion</location>
    </subcellularLocation>
</comment>
<comment type="similarity">
    <text evidence="4">Belongs to the 2-oxoacid dehydrogenase family.</text>
</comment>
<keyword id="KW-0324">Glycolysis</keyword>
<keyword id="KW-0496">Mitochondrion</keyword>
<keyword id="KW-1185">Reference proteome</keyword>
<keyword id="KW-0809">Transit peptide</keyword>
<reference key="1">
    <citation type="journal article" date="2002" name="Nature">
        <title>Sequence and analysis of chromosome 2 of Dictyostelium discoideum.</title>
        <authorList>
            <person name="Gloeckner G."/>
            <person name="Eichinger L."/>
            <person name="Szafranski K."/>
            <person name="Pachebat J.A."/>
            <person name="Bankier A.T."/>
            <person name="Dear P.H."/>
            <person name="Lehmann R."/>
            <person name="Baumgart C."/>
            <person name="Parra G."/>
            <person name="Abril J.F."/>
            <person name="Guigo R."/>
            <person name="Kumpf K."/>
            <person name="Tunggal B."/>
            <person name="Cox E.C."/>
            <person name="Quail M.A."/>
            <person name="Platzer M."/>
            <person name="Rosenthal A."/>
            <person name="Noegel A.A."/>
        </authorList>
    </citation>
    <scope>NUCLEOTIDE SEQUENCE [LARGE SCALE GENOMIC DNA]</scope>
    <source>
        <strain>AX4</strain>
    </source>
</reference>
<reference key="2">
    <citation type="journal article" date="2005" name="Nature">
        <title>The genome of the social amoeba Dictyostelium discoideum.</title>
        <authorList>
            <person name="Eichinger L."/>
            <person name="Pachebat J.A."/>
            <person name="Gloeckner G."/>
            <person name="Rajandream M.A."/>
            <person name="Sucgang R."/>
            <person name="Berriman M."/>
            <person name="Song J."/>
            <person name="Olsen R."/>
            <person name="Szafranski K."/>
            <person name="Xu Q."/>
            <person name="Tunggal B."/>
            <person name="Kummerfeld S."/>
            <person name="Madera M."/>
            <person name="Konfortov B.A."/>
            <person name="Rivero F."/>
            <person name="Bankier A.T."/>
            <person name="Lehmann R."/>
            <person name="Hamlin N."/>
            <person name="Davies R."/>
            <person name="Gaudet P."/>
            <person name="Fey P."/>
            <person name="Pilcher K."/>
            <person name="Chen G."/>
            <person name="Saunders D."/>
            <person name="Sodergren E.J."/>
            <person name="Davis P."/>
            <person name="Kerhornou A."/>
            <person name="Nie X."/>
            <person name="Hall N."/>
            <person name="Anjard C."/>
            <person name="Hemphill L."/>
            <person name="Bason N."/>
            <person name="Farbrother P."/>
            <person name="Desany B."/>
            <person name="Just E."/>
            <person name="Morio T."/>
            <person name="Rost R."/>
            <person name="Churcher C.M."/>
            <person name="Cooper J."/>
            <person name="Haydock S."/>
            <person name="van Driessche N."/>
            <person name="Cronin A."/>
            <person name="Goodhead I."/>
            <person name="Muzny D.M."/>
            <person name="Mourier T."/>
            <person name="Pain A."/>
            <person name="Lu M."/>
            <person name="Harper D."/>
            <person name="Lindsay R."/>
            <person name="Hauser H."/>
            <person name="James K.D."/>
            <person name="Quiles M."/>
            <person name="Madan Babu M."/>
            <person name="Saito T."/>
            <person name="Buchrieser C."/>
            <person name="Wardroper A."/>
            <person name="Felder M."/>
            <person name="Thangavelu M."/>
            <person name="Johnson D."/>
            <person name="Knights A."/>
            <person name="Loulseged H."/>
            <person name="Mungall K.L."/>
            <person name="Oliver K."/>
            <person name="Price C."/>
            <person name="Quail M.A."/>
            <person name="Urushihara H."/>
            <person name="Hernandez J."/>
            <person name="Rabbinowitsch E."/>
            <person name="Steffen D."/>
            <person name="Sanders M."/>
            <person name="Ma J."/>
            <person name="Kohara Y."/>
            <person name="Sharp S."/>
            <person name="Simmonds M.N."/>
            <person name="Spiegler S."/>
            <person name="Tivey A."/>
            <person name="Sugano S."/>
            <person name="White B."/>
            <person name="Walker D."/>
            <person name="Woodward J.R."/>
            <person name="Winckler T."/>
            <person name="Tanaka Y."/>
            <person name="Shaulsky G."/>
            <person name="Schleicher M."/>
            <person name="Weinstock G.M."/>
            <person name="Rosenthal A."/>
            <person name="Cox E.C."/>
            <person name="Chisholm R.L."/>
            <person name="Gibbs R.A."/>
            <person name="Loomis W.F."/>
            <person name="Platzer M."/>
            <person name="Kay R.R."/>
            <person name="Williams J.G."/>
            <person name="Dear P.H."/>
            <person name="Noegel A.A."/>
            <person name="Barrell B.G."/>
            <person name="Kuspa A."/>
        </authorList>
    </citation>
    <scope>NUCLEOTIDE SEQUENCE [LARGE SCALE GENOMIC DNA]</scope>
    <source>
        <strain>AX4</strain>
    </source>
</reference>
<gene>
    <name type="primary">pdhX</name>
    <name type="ORF">DDB_G0271564</name>
</gene>
<evidence type="ECO:0000250" key="1"/>
<evidence type="ECO:0000255" key="2"/>
<evidence type="ECO:0000255" key="3">
    <source>
        <dbReference type="PROSITE-ProRule" id="PRU01170"/>
    </source>
</evidence>
<evidence type="ECO:0000305" key="4"/>